<reference key="1">
    <citation type="journal article" date="2009" name="Proc. Natl. Acad. Sci. U.S.A.">
        <title>Biogeography of the Sulfolobus islandicus pan-genome.</title>
        <authorList>
            <person name="Reno M.L."/>
            <person name="Held N.L."/>
            <person name="Fields C.J."/>
            <person name="Burke P.V."/>
            <person name="Whitaker R.J."/>
        </authorList>
    </citation>
    <scope>NUCLEOTIDE SEQUENCE [LARGE SCALE GENOMIC DNA]</scope>
    <source>
        <strain>M.14.25 / Kamchatka #1</strain>
    </source>
</reference>
<name>PSB1_SACI4</name>
<keyword id="KW-0068">Autocatalytic cleavage</keyword>
<keyword id="KW-0963">Cytoplasm</keyword>
<keyword id="KW-0378">Hydrolase</keyword>
<keyword id="KW-0645">Protease</keyword>
<keyword id="KW-0647">Proteasome</keyword>
<keyword id="KW-0888">Threonine protease</keyword>
<keyword id="KW-0865">Zymogen</keyword>
<organism>
    <name type="scientific">Saccharolobus islandicus (strain M.14.25 / Kamchatka #1)</name>
    <name type="common">Sulfolobus islandicus</name>
    <dbReference type="NCBI Taxonomy" id="427317"/>
    <lineage>
        <taxon>Archaea</taxon>
        <taxon>Thermoproteota</taxon>
        <taxon>Thermoprotei</taxon>
        <taxon>Sulfolobales</taxon>
        <taxon>Sulfolobaceae</taxon>
        <taxon>Saccharolobus</taxon>
    </lineage>
</organism>
<dbReference type="EC" id="3.4.25.1" evidence="1"/>
<dbReference type="EMBL" id="CP001400">
    <property type="protein sequence ID" value="ACP38130.1"/>
    <property type="molecule type" value="Genomic_DNA"/>
</dbReference>
<dbReference type="SMR" id="C3MVD5"/>
<dbReference type="MEROPS" id="T01.002"/>
<dbReference type="KEGG" id="sia:M1425_1376"/>
<dbReference type="HOGENOM" id="CLU_035750_7_2_2"/>
<dbReference type="Proteomes" id="UP000001350">
    <property type="component" value="Chromosome"/>
</dbReference>
<dbReference type="GO" id="GO:0005737">
    <property type="term" value="C:cytoplasm"/>
    <property type="evidence" value="ECO:0007669"/>
    <property type="project" value="UniProtKB-SubCell"/>
</dbReference>
<dbReference type="GO" id="GO:0019774">
    <property type="term" value="C:proteasome core complex, beta-subunit complex"/>
    <property type="evidence" value="ECO:0007669"/>
    <property type="project" value="UniProtKB-UniRule"/>
</dbReference>
<dbReference type="GO" id="GO:0004298">
    <property type="term" value="F:threonine-type endopeptidase activity"/>
    <property type="evidence" value="ECO:0007669"/>
    <property type="project" value="UniProtKB-UniRule"/>
</dbReference>
<dbReference type="GO" id="GO:0010498">
    <property type="term" value="P:proteasomal protein catabolic process"/>
    <property type="evidence" value="ECO:0007669"/>
    <property type="project" value="UniProtKB-UniRule"/>
</dbReference>
<dbReference type="CDD" id="cd03764">
    <property type="entry name" value="proteasome_beta_archeal"/>
    <property type="match status" value="1"/>
</dbReference>
<dbReference type="FunFam" id="3.60.20.10:FF:000049">
    <property type="entry name" value="Proteasome subunit beta"/>
    <property type="match status" value="1"/>
</dbReference>
<dbReference type="Gene3D" id="3.60.20.10">
    <property type="entry name" value="Glutamine Phosphoribosylpyrophosphate, subunit 1, domain 1"/>
    <property type="match status" value="1"/>
</dbReference>
<dbReference type="HAMAP" id="MF_02113_A">
    <property type="entry name" value="Proteasome_B_A"/>
    <property type="match status" value="1"/>
</dbReference>
<dbReference type="InterPro" id="IPR029055">
    <property type="entry name" value="Ntn_hydrolases_N"/>
</dbReference>
<dbReference type="InterPro" id="IPR019983">
    <property type="entry name" value="Pept_T1A_Psome_bsu_arc"/>
</dbReference>
<dbReference type="InterPro" id="IPR000243">
    <property type="entry name" value="Pept_T1A_subB"/>
</dbReference>
<dbReference type="InterPro" id="IPR016050">
    <property type="entry name" value="Proteasome_bsu_CS"/>
</dbReference>
<dbReference type="InterPro" id="IPR001353">
    <property type="entry name" value="Proteasome_sua/b"/>
</dbReference>
<dbReference type="InterPro" id="IPR023333">
    <property type="entry name" value="Proteasome_suB-type"/>
</dbReference>
<dbReference type="NCBIfam" id="TIGR03634">
    <property type="entry name" value="arc_protsome_B"/>
    <property type="match status" value="1"/>
</dbReference>
<dbReference type="PANTHER" id="PTHR32194:SF0">
    <property type="entry name" value="ATP-DEPENDENT PROTEASE SUBUNIT HSLV"/>
    <property type="match status" value="1"/>
</dbReference>
<dbReference type="PANTHER" id="PTHR32194">
    <property type="entry name" value="METALLOPROTEASE TLDD"/>
    <property type="match status" value="1"/>
</dbReference>
<dbReference type="Pfam" id="PF00227">
    <property type="entry name" value="Proteasome"/>
    <property type="match status" value="1"/>
</dbReference>
<dbReference type="PRINTS" id="PR00141">
    <property type="entry name" value="PROTEASOME"/>
</dbReference>
<dbReference type="SUPFAM" id="SSF56235">
    <property type="entry name" value="N-terminal nucleophile aminohydrolases (Ntn hydrolases)"/>
    <property type="match status" value="1"/>
</dbReference>
<dbReference type="PROSITE" id="PS00854">
    <property type="entry name" value="PROTEASOME_BETA_1"/>
    <property type="match status" value="1"/>
</dbReference>
<dbReference type="PROSITE" id="PS51476">
    <property type="entry name" value="PROTEASOME_BETA_2"/>
    <property type="match status" value="1"/>
</dbReference>
<feature type="propeptide" id="PRO_0000397434" description="Removed in mature form; by autocatalysis" evidence="1">
    <location>
        <begin position="1"/>
        <end position="17"/>
    </location>
</feature>
<feature type="chain" id="PRO_0000397435" description="Proteasome subunit beta 1">
    <location>
        <begin position="18"/>
        <end position="211"/>
    </location>
</feature>
<feature type="active site" description="Nucleophile" evidence="1">
    <location>
        <position position="18"/>
    </location>
</feature>
<gene>
    <name evidence="1" type="primary">psmB1</name>
    <name type="ordered locus">M1425_1376</name>
</gene>
<comment type="function">
    <text evidence="1">Component of the proteasome core, a large protease complex with broad specificity involved in protein degradation.</text>
</comment>
<comment type="catalytic activity">
    <reaction evidence="1">
        <text>Cleavage of peptide bonds with very broad specificity.</text>
        <dbReference type="EC" id="3.4.25.1"/>
    </reaction>
</comment>
<comment type="activity regulation">
    <text evidence="1">The formation of the proteasomal ATPase PAN-20S proteasome complex, via the docking of the C-termini of PAN into the intersubunit pockets in the alpha-rings, triggers opening of the gate for substrate entry. Interconversion between the open-gate and close-gate conformations leads to a dynamic regulation of the 20S proteasome proteolysis activity.</text>
</comment>
<comment type="subunit">
    <text evidence="1">The 20S proteasome core is composed of 14 alpha and 14 beta subunits that assemble into four stacked heptameric rings, resulting in a barrel-shaped structure. The two inner rings, each composed of seven catalytic beta subunits, are sandwiched by two outer rings, each composed of seven alpha subunits. The catalytic chamber with the active sites is on the inside of the barrel. Has a gated structure, the ends of the cylinder being occluded by the N-termini of the alpha-subunits. Is capped at one or both ends by the proteasome regulatory ATPase, PAN.</text>
</comment>
<comment type="subcellular location">
    <subcellularLocation>
        <location evidence="1">Cytoplasm</location>
    </subcellularLocation>
</comment>
<comment type="similarity">
    <text evidence="1">Belongs to the peptidase T1B family.</text>
</comment>
<proteinExistence type="inferred from homology"/>
<evidence type="ECO:0000255" key="1">
    <source>
        <dbReference type="HAMAP-Rule" id="MF_02113"/>
    </source>
</evidence>
<accession>C3MVD5</accession>
<protein>
    <recommendedName>
        <fullName evidence="1">Proteasome subunit beta 1</fullName>
        <ecNumber evidence="1">3.4.25.1</ecNumber>
    </recommendedName>
    <alternativeName>
        <fullName evidence="1">20S proteasome beta subunit 1</fullName>
    </alternativeName>
    <alternativeName>
        <fullName evidence="1">Proteasome core protein PsmB 1</fullName>
    </alternativeName>
</protein>
<sequence length="211" mass="23197">MVIMGNELQLENKILKGTTTVGIKVNDGVVLAADRRASAGFFVANKMVRKVLYITDKIGITTAGSVADLQFIYDVLKNIYHYNSITKYGPISIKGIATRLANVLSATKYFPYIVQILIGGYDDQPRLFNLDYLGDITEENYVATGSGSPVAMGVLEDEYNPKMTLDEAADLAKRAVFSAIKRDSFTGTGVIVAKIHSKGHEELEFYLNKKV</sequence>